<feature type="chain" id="PRO_0000284593" description="Phosphonoacetaldehyde hydrolase">
    <location>
        <begin position="1"/>
        <end position="275"/>
    </location>
</feature>
<feature type="active site" description="Nucleophile" evidence="1">
    <location>
        <position position="15"/>
    </location>
</feature>
<feature type="active site" description="Schiff-base intermediate with substrate" evidence="1">
    <location>
        <position position="56"/>
    </location>
</feature>
<feature type="binding site" evidence="1">
    <location>
        <position position="15"/>
    </location>
    <ligand>
        <name>Mg(2+)</name>
        <dbReference type="ChEBI" id="CHEBI:18420"/>
    </ligand>
</feature>
<feature type="binding site" evidence="1">
    <location>
        <position position="17"/>
    </location>
    <ligand>
        <name>Mg(2+)</name>
        <dbReference type="ChEBI" id="CHEBI:18420"/>
    </ligand>
</feature>
<feature type="binding site" evidence="1">
    <location>
        <position position="189"/>
    </location>
    <ligand>
        <name>Mg(2+)</name>
        <dbReference type="ChEBI" id="CHEBI:18420"/>
    </ligand>
</feature>
<protein>
    <recommendedName>
        <fullName evidence="1">Phosphonoacetaldehyde hydrolase</fullName>
        <shortName evidence="1">Phosphonatase</shortName>
        <ecNumber evidence="1">3.11.1.1</ecNumber>
    </recommendedName>
    <alternativeName>
        <fullName evidence="1">Phosphonoacetaldehyde phosphonohydrolase</fullName>
    </alternativeName>
</protein>
<accession>Q1I7T9</accession>
<organism>
    <name type="scientific">Pseudomonas entomophila (strain L48)</name>
    <dbReference type="NCBI Taxonomy" id="384676"/>
    <lineage>
        <taxon>Bacteria</taxon>
        <taxon>Pseudomonadati</taxon>
        <taxon>Pseudomonadota</taxon>
        <taxon>Gammaproteobacteria</taxon>
        <taxon>Pseudomonadales</taxon>
        <taxon>Pseudomonadaceae</taxon>
        <taxon>Pseudomonas</taxon>
    </lineage>
</organism>
<name>PHNX_PSEE4</name>
<reference key="1">
    <citation type="journal article" date="2006" name="Nat. Biotechnol.">
        <title>Complete genome sequence of the entomopathogenic and metabolically versatile soil bacterium Pseudomonas entomophila.</title>
        <authorList>
            <person name="Vodovar N."/>
            <person name="Vallenet D."/>
            <person name="Cruveiller S."/>
            <person name="Rouy Z."/>
            <person name="Barbe V."/>
            <person name="Acosta C."/>
            <person name="Cattolico L."/>
            <person name="Jubin C."/>
            <person name="Lajus A."/>
            <person name="Segurens B."/>
            <person name="Vacherie B."/>
            <person name="Wincker P."/>
            <person name="Weissenbach J."/>
            <person name="Lemaitre B."/>
            <person name="Medigue C."/>
            <person name="Boccard F."/>
        </authorList>
    </citation>
    <scope>NUCLEOTIDE SEQUENCE [LARGE SCALE GENOMIC DNA]</scope>
    <source>
        <strain>L48</strain>
    </source>
</reference>
<comment type="function">
    <text evidence="1">Involved in phosphonate degradation.</text>
</comment>
<comment type="catalytic activity">
    <reaction evidence="1">
        <text>phosphonoacetaldehyde + H2O = acetaldehyde + phosphate + H(+)</text>
        <dbReference type="Rhea" id="RHEA:18905"/>
        <dbReference type="ChEBI" id="CHEBI:15343"/>
        <dbReference type="ChEBI" id="CHEBI:15377"/>
        <dbReference type="ChEBI" id="CHEBI:15378"/>
        <dbReference type="ChEBI" id="CHEBI:43474"/>
        <dbReference type="ChEBI" id="CHEBI:58383"/>
        <dbReference type="EC" id="3.11.1.1"/>
    </reaction>
</comment>
<comment type="cofactor">
    <cofactor evidence="1">
        <name>Mg(2+)</name>
        <dbReference type="ChEBI" id="CHEBI:18420"/>
    </cofactor>
    <text evidence="1">Binds 1 Mg(2+) ion per subunit.</text>
</comment>
<comment type="subunit">
    <text evidence="1">Homodimer.</text>
</comment>
<comment type="similarity">
    <text evidence="1">Belongs to the HAD-like hydrolase superfamily. PhnX family.</text>
</comment>
<gene>
    <name evidence="1" type="primary">phnX</name>
    <name type="ordered locus">PSEEN3554</name>
</gene>
<dbReference type="EC" id="3.11.1.1" evidence="1"/>
<dbReference type="EMBL" id="CT573326">
    <property type="protein sequence ID" value="CAK16289.1"/>
    <property type="molecule type" value="Genomic_DNA"/>
</dbReference>
<dbReference type="RefSeq" id="WP_011534673.1">
    <property type="nucleotide sequence ID" value="NC_008027.1"/>
</dbReference>
<dbReference type="SMR" id="Q1I7T9"/>
<dbReference type="STRING" id="384676.PSEEN3554"/>
<dbReference type="GeneID" id="32806625"/>
<dbReference type="KEGG" id="pen:PSEEN3554"/>
<dbReference type="eggNOG" id="COG0637">
    <property type="taxonomic scope" value="Bacteria"/>
</dbReference>
<dbReference type="HOGENOM" id="CLU_045011_12_0_6"/>
<dbReference type="OrthoDB" id="5504491at2"/>
<dbReference type="Proteomes" id="UP000000658">
    <property type="component" value="Chromosome"/>
</dbReference>
<dbReference type="GO" id="GO:0005829">
    <property type="term" value="C:cytosol"/>
    <property type="evidence" value="ECO:0007669"/>
    <property type="project" value="TreeGrafter"/>
</dbReference>
<dbReference type="GO" id="GO:0000287">
    <property type="term" value="F:magnesium ion binding"/>
    <property type="evidence" value="ECO:0007669"/>
    <property type="project" value="UniProtKB-UniRule"/>
</dbReference>
<dbReference type="GO" id="GO:0008967">
    <property type="term" value="F:phosphoglycolate phosphatase activity"/>
    <property type="evidence" value="ECO:0007669"/>
    <property type="project" value="TreeGrafter"/>
</dbReference>
<dbReference type="GO" id="GO:0050194">
    <property type="term" value="F:phosphonoacetaldehyde hydrolase activity"/>
    <property type="evidence" value="ECO:0007669"/>
    <property type="project" value="UniProtKB-UniRule"/>
</dbReference>
<dbReference type="GO" id="GO:0006281">
    <property type="term" value="P:DNA repair"/>
    <property type="evidence" value="ECO:0007669"/>
    <property type="project" value="TreeGrafter"/>
</dbReference>
<dbReference type="GO" id="GO:0019700">
    <property type="term" value="P:organic phosphonate catabolic process"/>
    <property type="evidence" value="ECO:0007669"/>
    <property type="project" value="InterPro"/>
</dbReference>
<dbReference type="CDD" id="cd02586">
    <property type="entry name" value="HAD_PHN"/>
    <property type="match status" value="1"/>
</dbReference>
<dbReference type="FunFam" id="1.10.150.240:FF:000006">
    <property type="entry name" value="Phosphonoacetaldehyde hydrolase"/>
    <property type="match status" value="1"/>
</dbReference>
<dbReference type="Gene3D" id="3.40.50.1000">
    <property type="entry name" value="HAD superfamily/HAD-like"/>
    <property type="match status" value="1"/>
</dbReference>
<dbReference type="Gene3D" id="1.10.150.240">
    <property type="entry name" value="Putative phosphatase, domain 2"/>
    <property type="match status" value="1"/>
</dbReference>
<dbReference type="HAMAP" id="MF_01375">
    <property type="entry name" value="PhnX"/>
    <property type="match status" value="1"/>
</dbReference>
<dbReference type="InterPro" id="IPR050155">
    <property type="entry name" value="HAD-like_hydrolase_sf"/>
</dbReference>
<dbReference type="InterPro" id="IPR036412">
    <property type="entry name" value="HAD-like_sf"/>
</dbReference>
<dbReference type="InterPro" id="IPR006439">
    <property type="entry name" value="HAD-SF_hydro_IA"/>
</dbReference>
<dbReference type="InterPro" id="IPR023214">
    <property type="entry name" value="HAD_sf"/>
</dbReference>
<dbReference type="InterPro" id="IPR023198">
    <property type="entry name" value="PGP-like_dom2"/>
</dbReference>
<dbReference type="InterPro" id="IPR006323">
    <property type="entry name" value="Phosphonoacetald_hydro"/>
</dbReference>
<dbReference type="NCBIfam" id="TIGR01509">
    <property type="entry name" value="HAD-SF-IA-v3"/>
    <property type="match status" value="1"/>
</dbReference>
<dbReference type="NCBIfam" id="TIGR01422">
    <property type="entry name" value="phosphonatase"/>
    <property type="match status" value="1"/>
</dbReference>
<dbReference type="PANTHER" id="PTHR43434">
    <property type="entry name" value="PHOSPHOGLYCOLATE PHOSPHATASE"/>
    <property type="match status" value="1"/>
</dbReference>
<dbReference type="PANTHER" id="PTHR43434:SF19">
    <property type="entry name" value="PHOSPHONOACETALDEHYDE HYDROLASE"/>
    <property type="match status" value="1"/>
</dbReference>
<dbReference type="Pfam" id="PF00702">
    <property type="entry name" value="Hydrolase"/>
    <property type="match status" value="1"/>
</dbReference>
<dbReference type="SFLD" id="SFLDS00003">
    <property type="entry name" value="Haloacid_Dehalogenase"/>
    <property type="match status" value="1"/>
</dbReference>
<dbReference type="SFLD" id="SFLDF00038">
    <property type="entry name" value="phosphonoacetaldehyde_hydrolas"/>
    <property type="match status" value="1"/>
</dbReference>
<dbReference type="SUPFAM" id="SSF56784">
    <property type="entry name" value="HAD-like"/>
    <property type="match status" value="1"/>
</dbReference>
<proteinExistence type="inferred from homology"/>
<keyword id="KW-0378">Hydrolase</keyword>
<keyword id="KW-0460">Magnesium</keyword>
<keyword id="KW-0479">Metal-binding</keyword>
<keyword id="KW-0704">Schiff base</keyword>
<evidence type="ECO:0000255" key="1">
    <source>
        <dbReference type="HAMAP-Rule" id="MF_01375"/>
    </source>
</evidence>
<sequence length="275" mass="30053">MNYSNPTQLQAAILDWAGTVVDFGSFAPTQIFVEAFAEFDVQVSIEEARGPMGMGKWDHIRTLCDVPEIAERYRKVFGRTPTDDDVTAIYERFMPLQIEKIAVHSALIPGALDTLTGLRKEGLKIGSCSGYPKVVMDKVVELAAQNGYVADHVVATDETPNGRPWPAQALANVIALGIDDVAACVKVDDTVPGILEGRRAGMWTVALVCSGNALGLTWEGYRALSAEKLESERKRIHGMFAASRPHYLIDTINELPEVIADINRRLAKGEMPQAV</sequence>